<comment type="function">
    <text evidence="1">Component of the cytochrome b6-f complex, which mediates electron transfer between photosystem II (PSII) and photosystem I (PSI), cyclic electron flow around PSI, and state transitions.</text>
</comment>
<comment type="catalytic activity">
    <reaction evidence="1">
        <text>2 oxidized [plastocyanin] + a plastoquinol + 2 H(+)(in) = 2 reduced [plastocyanin] + a plastoquinone + 4 H(+)(out)</text>
        <dbReference type="Rhea" id="RHEA:22148"/>
        <dbReference type="Rhea" id="RHEA-COMP:9561"/>
        <dbReference type="Rhea" id="RHEA-COMP:9562"/>
        <dbReference type="Rhea" id="RHEA-COMP:10039"/>
        <dbReference type="Rhea" id="RHEA-COMP:10040"/>
        <dbReference type="ChEBI" id="CHEBI:15378"/>
        <dbReference type="ChEBI" id="CHEBI:17757"/>
        <dbReference type="ChEBI" id="CHEBI:29036"/>
        <dbReference type="ChEBI" id="CHEBI:49552"/>
        <dbReference type="ChEBI" id="CHEBI:62192"/>
        <dbReference type="EC" id="7.1.1.6"/>
    </reaction>
</comment>
<comment type="cofactor">
    <cofactor evidence="1">
        <name>[2Fe-2S] cluster</name>
        <dbReference type="ChEBI" id="CHEBI:190135"/>
    </cofactor>
    <text evidence="1">Binds 1 [2Fe-2S] cluster per subunit.</text>
</comment>
<comment type="subunit">
    <text evidence="1">The 4 large subunits of the cytochrome b6-f complex are cytochrome b6, subunit IV (17 kDa polypeptide, PetD), cytochrome f and the Rieske protein, while the 4 small subunits are PetG, PetL, PetM and PetN. The complex functions as a dimer.</text>
</comment>
<comment type="subcellular location">
    <subcellularLocation>
        <location evidence="1">Cellular thylakoid membrane</location>
        <topology evidence="1">Single-pass membrane protein</topology>
    </subcellularLocation>
    <text evidence="1">The transmembrane helix obliquely spans the membrane in one monomer, and its extrinsic C-terminal domain is part of the other monomer.</text>
</comment>
<comment type="miscellaneous">
    <text>The Rieske iron-sulfur protein is a high potential 2Fe-2S protein.</text>
</comment>
<comment type="similarity">
    <text evidence="1">Belongs to the Rieske iron-sulfur protein family.</text>
</comment>
<proteinExistence type="inferred from homology"/>
<feature type="chain" id="PRO_0000298466" description="Cytochrome b6-f complex iron-sulfur subunit">
    <location>
        <begin position="1"/>
        <end position="172"/>
    </location>
</feature>
<feature type="transmembrane region" description="Helical" evidence="1">
    <location>
        <begin position="17"/>
        <end position="39"/>
    </location>
</feature>
<feature type="domain" description="Rieske" evidence="1">
    <location>
        <begin position="61"/>
        <end position="161"/>
    </location>
</feature>
<feature type="binding site" evidence="1">
    <location>
        <position position="107"/>
    </location>
    <ligand>
        <name>[2Fe-2S] cluster</name>
        <dbReference type="ChEBI" id="CHEBI:190135"/>
    </ligand>
</feature>
<feature type="binding site" evidence="1">
    <location>
        <position position="109"/>
    </location>
    <ligand>
        <name>[2Fe-2S] cluster</name>
        <dbReference type="ChEBI" id="CHEBI:190135"/>
    </ligand>
</feature>
<feature type="binding site" evidence="1">
    <location>
        <position position="125"/>
    </location>
    <ligand>
        <name>[2Fe-2S] cluster</name>
        <dbReference type="ChEBI" id="CHEBI:190135"/>
    </ligand>
</feature>
<feature type="binding site" evidence="1">
    <location>
        <position position="128"/>
    </location>
    <ligand>
        <name>[2Fe-2S] cluster</name>
        <dbReference type="ChEBI" id="CHEBI:190135"/>
    </ligand>
</feature>
<feature type="disulfide bond" evidence="1">
    <location>
        <begin position="112"/>
        <end position="127"/>
    </location>
</feature>
<keyword id="KW-0001">2Fe-2S</keyword>
<keyword id="KW-1015">Disulfide bond</keyword>
<keyword id="KW-0249">Electron transport</keyword>
<keyword id="KW-0408">Iron</keyword>
<keyword id="KW-0411">Iron-sulfur</keyword>
<keyword id="KW-0472">Membrane</keyword>
<keyword id="KW-0479">Metal-binding</keyword>
<keyword id="KW-0793">Thylakoid</keyword>
<keyword id="KW-1278">Translocase</keyword>
<keyword id="KW-0812">Transmembrane</keyword>
<keyword id="KW-1133">Transmembrane helix</keyword>
<keyword id="KW-0813">Transport</keyword>
<reference key="1">
    <citation type="journal article" date="2007" name="ISME J.">
        <title>Population level functional diversity in a microbial community revealed by comparative genomic and metagenomic analyses.</title>
        <authorList>
            <person name="Bhaya D."/>
            <person name="Grossman A.R."/>
            <person name="Steunou A.-S."/>
            <person name="Khuri N."/>
            <person name="Cohan F.M."/>
            <person name="Hamamura N."/>
            <person name="Melendrez M.C."/>
            <person name="Bateson M.M."/>
            <person name="Ward D.M."/>
            <person name="Heidelberg J.F."/>
        </authorList>
    </citation>
    <scope>NUCLEOTIDE SEQUENCE [LARGE SCALE GENOMIC DNA]</scope>
    <source>
        <strain>JA-3-3Ab</strain>
    </source>
</reference>
<organism>
    <name type="scientific">Synechococcus sp. (strain JA-3-3Ab)</name>
    <name type="common">Cyanobacteria bacterium Yellowstone A-Prime</name>
    <dbReference type="NCBI Taxonomy" id="321327"/>
    <lineage>
        <taxon>Bacteria</taxon>
        <taxon>Bacillati</taxon>
        <taxon>Cyanobacteriota</taxon>
        <taxon>Cyanophyceae</taxon>
        <taxon>Synechococcales</taxon>
        <taxon>Synechococcaceae</taxon>
        <taxon>Synechococcus</taxon>
    </lineage>
</organism>
<name>UCRI_SYNJA</name>
<dbReference type="EC" id="7.1.1.6" evidence="1"/>
<dbReference type="EMBL" id="CP000239">
    <property type="protein sequence ID" value="ABC99573.1"/>
    <property type="molecule type" value="Genomic_DNA"/>
</dbReference>
<dbReference type="RefSeq" id="WP_011430251.1">
    <property type="nucleotide sequence ID" value="NC_007775.1"/>
</dbReference>
<dbReference type="SMR" id="Q2JUP1"/>
<dbReference type="STRING" id="321327.CYA_1403"/>
<dbReference type="KEGG" id="cya:CYA_1403"/>
<dbReference type="eggNOG" id="COG0723">
    <property type="taxonomic scope" value="Bacteria"/>
</dbReference>
<dbReference type="HOGENOM" id="CLU_055690_8_0_3"/>
<dbReference type="OrthoDB" id="9767869at2"/>
<dbReference type="Proteomes" id="UP000008818">
    <property type="component" value="Chromosome"/>
</dbReference>
<dbReference type="GO" id="GO:0031676">
    <property type="term" value="C:plasma membrane-derived thylakoid membrane"/>
    <property type="evidence" value="ECO:0007669"/>
    <property type="project" value="UniProtKB-SubCell"/>
</dbReference>
<dbReference type="GO" id="GO:0051537">
    <property type="term" value="F:2 iron, 2 sulfur cluster binding"/>
    <property type="evidence" value="ECO:0007669"/>
    <property type="project" value="UniProtKB-KW"/>
</dbReference>
<dbReference type="GO" id="GO:0045158">
    <property type="term" value="F:electron transporter, transferring electrons within cytochrome b6/f complex of photosystem II activity"/>
    <property type="evidence" value="ECO:0007669"/>
    <property type="project" value="UniProtKB-UniRule"/>
</dbReference>
<dbReference type="GO" id="GO:0046872">
    <property type="term" value="F:metal ion binding"/>
    <property type="evidence" value="ECO:0007669"/>
    <property type="project" value="UniProtKB-KW"/>
</dbReference>
<dbReference type="GO" id="GO:0004497">
    <property type="term" value="F:monooxygenase activity"/>
    <property type="evidence" value="ECO:0007669"/>
    <property type="project" value="UniProtKB-ARBA"/>
</dbReference>
<dbReference type="GO" id="GO:0016705">
    <property type="term" value="F:oxidoreductase activity, acting on paired donors, with incorporation or reduction of molecular oxygen"/>
    <property type="evidence" value="ECO:0007669"/>
    <property type="project" value="UniProtKB-ARBA"/>
</dbReference>
<dbReference type="GO" id="GO:0009496">
    <property type="term" value="F:plastoquinol--plastocyanin reductase activity"/>
    <property type="evidence" value="ECO:0007669"/>
    <property type="project" value="UniProtKB-UniRule"/>
</dbReference>
<dbReference type="GO" id="GO:0015979">
    <property type="term" value="P:photosynthesis"/>
    <property type="evidence" value="ECO:0007669"/>
    <property type="project" value="UniProtKB-UniRule"/>
</dbReference>
<dbReference type="Gene3D" id="2.102.10.10">
    <property type="entry name" value="Rieske [2Fe-2S] iron-sulphur domain"/>
    <property type="match status" value="1"/>
</dbReference>
<dbReference type="Gene3D" id="1.20.5.700">
    <property type="entry name" value="Single helix bin"/>
    <property type="match status" value="1"/>
</dbReference>
<dbReference type="HAMAP" id="MF_01335">
    <property type="entry name" value="Cytb6_f_Rieske"/>
    <property type="match status" value="1"/>
</dbReference>
<dbReference type="InterPro" id="IPR023960">
    <property type="entry name" value="Cyt_b6_f_Rieske"/>
</dbReference>
<dbReference type="InterPro" id="IPR017941">
    <property type="entry name" value="Rieske_2Fe-2S"/>
</dbReference>
<dbReference type="InterPro" id="IPR036922">
    <property type="entry name" value="Rieske_2Fe-2S_sf"/>
</dbReference>
<dbReference type="InterPro" id="IPR014349">
    <property type="entry name" value="Rieske_Fe-S_prot"/>
</dbReference>
<dbReference type="InterPro" id="IPR005805">
    <property type="entry name" value="Rieske_Fe-S_prot_C"/>
</dbReference>
<dbReference type="NCBIfam" id="NF010001">
    <property type="entry name" value="PRK13474.1"/>
    <property type="match status" value="1"/>
</dbReference>
<dbReference type="PANTHER" id="PTHR10134">
    <property type="entry name" value="CYTOCHROME B-C1 COMPLEX SUBUNIT RIESKE, MITOCHONDRIAL"/>
    <property type="match status" value="1"/>
</dbReference>
<dbReference type="Pfam" id="PF00355">
    <property type="entry name" value="Rieske"/>
    <property type="match status" value="1"/>
</dbReference>
<dbReference type="Pfam" id="PF25471">
    <property type="entry name" value="TM_PetC"/>
    <property type="match status" value="1"/>
</dbReference>
<dbReference type="PRINTS" id="PR00162">
    <property type="entry name" value="RIESKE"/>
</dbReference>
<dbReference type="SUPFAM" id="SSF50022">
    <property type="entry name" value="ISP domain"/>
    <property type="match status" value="1"/>
</dbReference>
<dbReference type="PROSITE" id="PS51296">
    <property type="entry name" value="RIESKE"/>
    <property type="match status" value="1"/>
</dbReference>
<gene>
    <name evidence="1" type="primary">petC</name>
    <name type="ordered locus">CYA_1403</name>
</gene>
<evidence type="ECO:0000255" key="1">
    <source>
        <dbReference type="HAMAP-Rule" id="MF_01335"/>
    </source>
</evidence>
<protein>
    <recommendedName>
        <fullName evidence="1">Cytochrome b6-f complex iron-sulfur subunit</fullName>
        <ecNumber evidence="1">7.1.1.6</ecNumber>
    </recommendedName>
    <alternativeName>
        <fullName evidence="1">Plastohydroquinone:plastocyanin oxidoreductase iron-sulfur protein</fullName>
        <shortName evidence="1">ISP</shortName>
        <shortName evidence="1">RISP</shortName>
    </alternativeName>
    <alternativeName>
        <fullName evidence="1">Rieske iron-sulfur protein</fullName>
    </alternativeName>
</protein>
<sequence>MTEAVSNFEAPPMSRRVFLNALLSSSVGVVVVGTLYPVVKYFIPPSSGGAGEGVIAQDALGKPISVSELLATHAATDRVLAQGLKGDPTYIVIDNGAVANYGLNAVCTHLGCVVPWNAGENLFKCPCHGSQYAANGKVIRGPAPRSLELVSATVDGDNVRFSPWQGPDFREA</sequence>
<accession>Q2JUP1</accession>